<accession>B4LRB9</accession>
<sequence>MIAAANCLETEKAKLRREIAELQAALNAKEQNLRDLQSRTAASHLDPEADLQHATREQYATLNNDDIARYSRQLILSDFGVSGQLKLKNSAVLIVGLGGLGCPAAQYLCSAGCGNLGLVDYDEVERSNLHRQTLHTVARCGMSKTESARIALLELNPHCRITCYPRLLNSSNAMHIMRAYDIVLDCSDNVATRYLLNDACTMLRKPLVSGSALKLDGQLTVYSYGAQGPCYRCIYPVPPPPEAVTNCGDGGVLGAVTGTIGAMQALEAIKIIIGLGDVLAGRMLIFDGSSCQFRNIKIRSKRPNCHVCSAQPLITGLIDYELFCGMNANDKDNAVKLLEPEERINVLDYQRLMKTKAHLLLDVRAPAEFEICQLPDSINVPLAHVLDDSYLQRFAQQLESKELPIFVVCRRGNDSQIAVQHMRTRLPEHSIRDLEGGLHAWTNQVDQSFPIY</sequence>
<feature type="chain" id="PRO_0000369210" description="Adenylyltransferase and sulfurtransferase MOCS3">
    <location>
        <begin position="1"/>
        <end position="452"/>
    </location>
</feature>
<feature type="domain" description="Rhodanese" evidence="3">
    <location>
        <begin position="354"/>
        <end position="450"/>
    </location>
</feature>
<feature type="active site" description="Glycyl thioester intermediate; for adenylyltransferase activity" evidence="3">
    <location>
        <position position="247"/>
    </location>
</feature>
<feature type="active site" description="Cysteine persulfide intermediate; for sulfurtransferase activity" evidence="3">
    <location>
        <position position="409"/>
    </location>
</feature>
<feature type="binding site" evidence="3">
    <location>
        <position position="99"/>
    </location>
    <ligand>
        <name>ATP</name>
        <dbReference type="ChEBI" id="CHEBI:30616"/>
    </ligand>
</feature>
<feature type="binding site" evidence="3">
    <location>
        <position position="120"/>
    </location>
    <ligand>
        <name>ATP</name>
        <dbReference type="ChEBI" id="CHEBI:30616"/>
    </ligand>
</feature>
<feature type="binding site" evidence="3">
    <location>
        <begin position="127"/>
        <end position="131"/>
    </location>
    <ligand>
        <name>ATP</name>
        <dbReference type="ChEBI" id="CHEBI:30616"/>
    </ligand>
</feature>
<feature type="binding site" evidence="3">
    <location>
        <position position="144"/>
    </location>
    <ligand>
        <name>ATP</name>
        <dbReference type="ChEBI" id="CHEBI:30616"/>
    </ligand>
</feature>
<feature type="binding site" evidence="3">
    <location>
        <begin position="188"/>
        <end position="189"/>
    </location>
    <ligand>
        <name>ATP</name>
        <dbReference type="ChEBI" id="CHEBI:30616"/>
    </ligand>
</feature>
<feature type="binding site" evidence="3">
    <location>
        <position position="230"/>
    </location>
    <ligand>
        <name>Zn(2+)</name>
        <dbReference type="ChEBI" id="CHEBI:29105"/>
    </ligand>
</feature>
<feature type="binding site" evidence="3">
    <location>
        <position position="233"/>
    </location>
    <ligand>
        <name>Zn(2+)</name>
        <dbReference type="ChEBI" id="CHEBI:29105"/>
    </ligand>
</feature>
<feature type="binding site" evidence="3">
    <location>
        <position position="305"/>
    </location>
    <ligand>
        <name>Zn(2+)</name>
        <dbReference type="ChEBI" id="CHEBI:29105"/>
    </ligand>
</feature>
<feature type="binding site" evidence="3">
    <location>
        <position position="308"/>
    </location>
    <ligand>
        <name>Zn(2+)</name>
        <dbReference type="ChEBI" id="CHEBI:29105"/>
    </ligand>
</feature>
<reference key="1">
    <citation type="journal article" date="2007" name="Nature">
        <title>Evolution of genes and genomes on the Drosophila phylogeny.</title>
        <authorList>
            <consortium name="Drosophila 12 genomes consortium"/>
        </authorList>
    </citation>
    <scope>NUCLEOTIDE SEQUENCE [LARGE SCALE GENOMIC DNA]</scope>
    <source>
        <strain>Tucson 15010-1051.87</strain>
    </source>
</reference>
<name>MOCS3_DROVI</name>
<comment type="function">
    <text evidence="3">Plays a central role in 2-thiolation of mcm(5)S(2)U at tRNA wobble positions of cytosolic tRNA(Lys), tRNA(Glu) and tRNA(Gln). Also essential during biosynthesis of the molybdenum cofactor. Acts by mediating the C-terminal thiocarboxylation of sulfur carriers URM1 and MOCS2A. Its N-terminus first activates URM1 and MOCS2A as acyl-adenylates (-COAMP), then the persulfide sulfur on the catalytic cysteine is transferred to URM1 and MOCS2A to form thiocarboxylation (-COSH) of their C-terminus. The reaction probably involves hydrogen sulfide that is generated from the persulfide intermediate and that acts as a nucleophile towards URM1 and MOCS2A. Subsequently, a transient disulfide bond is formed. Does not use thiosulfate as sulfur donor; NFS1 probably acting as a sulfur donor for thiocarboxylation reactions.</text>
</comment>
<comment type="catalytic activity">
    <reaction evidence="3">
        <text>[molybdopterin-synthase sulfur-carrier protein]-C-terminal Gly-Gly + ATP + H(+) = [molybdopterin-synthase sulfur-carrier protein]-C-terminal Gly-Gly-AMP + diphosphate</text>
        <dbReference type="Rhea" id="RHEA:43616"/>
        <dbReference type="Rhea" id="RHEA-COMP:12159"/>
        <dbReference type="Rhea" id="RHEA-COMP:12202"/>
        <dbReference type="ChEBI" id="CHEBI:15378"/>
        <dbReference type="ChEBI" id="CHEBI:30616"/>
        <dbReference type="ChEBI" id="CHEBI:33019"/>
        <dbReference type="ChEBI" id="CHEBI:90618"/>
        <dbReference type="ChEBI" id="CHEBI:90778"/>
        <dbReference type="EC" id="2.7.7.80"/>
    </reaction>
</comment>
<comment type="catalytic activity">
    <reaction evidence="3">
        <text>[molybdopterin-synthase sulfur-carrier protein]-C-terminal Gly-Gly-AMP + S-sulfanyl-L-cysteinyl-[cysteine desulfurase] + AH2 = [molybdopterin-synthase sulfur-carrier protein]-C-terminal-Gly-aminoethanethioate + L-cysteinyl-[cysteine desulfurase] + A + AMP + 2 H(+)</text>
        <dbReference type="Rhea" id="RHEA:48612"/>
        <dbReference type="Rhea" id="RHEA-COMP:12157"/>
        <dbReference type="Rhea" id="RHEA-COMP:12158"/>
        <dbReference type="Rhea" id="RHEA-COMP:12159"/>
        <dbReference type="Rhea" id="RHEA-COMP:19907"/>
        <dbReference type="ChEBI" id="CHEBI:13193"/>
        <dbReference type="ChEBI" id="CHEBI:15378"/>
        <dbReference type="ChEBI" id="CHEBI:17499"/>
        <dbReference type="ChEBI" id="CHEBI:29950"/>
        <dbReference type="ChEBI" id="CHEBI:61963"/>
        <dbReference type="ChEBI" id="CHEBI:90618"/>
        <dbReference type="ChEBI" id="CHEBI:232372"/>
        <dbReference type="ChEBI" id="CHEBI:456215"/>
        <dbReference type="EC" id="2.8.1.11"/>
    </reaction>
</comment>
<comment type="cofactor">
    <cofactor evidence="3">
        <name>Zn(2+)</name>
        <dbReference type="ChEBI" id="CHEBI:29105"/>
    </cofactor>
    <text evidence="3">Binds 1 zinc ion per subunit.</text>
</comment>
<comment type="pathway">
    <text evidence="3">tRNA modification; 5-methoxycarbonylmethyl-2-thiouridine-tRNA biosynthesis.</text>
</comment>
<comment type="pathway">
    <text evidence="3">Cofactor biosynthesis; molybdopterin biosynthesis.</text>
</comment>
<comment type="subcellular location">
    <subcellularLocation>
        <location evidence="1">Cytoplasm</location>
        <location evidence="1">Cytosol</location>
    </subcellularLocation>
</comment>
<comment type="similarity">
    <text evidence="3">In the N-terminal section; belongs to the HesA/MoeB/ThiF family. UBA4 subfamily.</text>
</comment>
<protein>
    <recommendedName>
        <fullName evidence="3">Adenylyltransferase and sulfurtransferase MOCS3</fullName>
    </recommendedName>
    <alternativeName>
        <fullName evidence="3">Molybdenum cofactor synthesis protein 3</fullName>
    </alternativeName>
    <alternativeName>
        <fullName evidence="2">Ubiquitin activating enzyme 4</fullName>
    </alternativeName>
    <domain>
        <recommendedName>
            <fullName evidence="3">Molybdopterin-synthase adenylyltransferase</fullName>
            <ecNumber evidence="3">2.7.7.80</ecNumber>
        </recommendedName>
        <alternativeName>
            <fullName evidence="3">Adenylyltransferase MOCS3</fullName>
        </alternativeName>
        <alternativeName>
            <fullName evidence="3">Sulfur carrier protein MOCS2A adenylyltransferase</fullName>
        </alternativeName>
    </domain>
    <domain>
        <recommendedName>
            <fullName evidence="3">Molybdopterin-synthase sulfurtransferase</fullName>
            <ecNumber evidence="3">2.8.1.11</ecNumber>
        </recommendedName>
        <alternativeName>
            <fullName evidence="3">Sulfur carrier protein MOCS2A sulfurtransferase</fullName>
        </alternativeName>
        <alternativeName>
            <fullName evidence="3">Sulfurtransferase MOCS3</fullName>
        </alternativeName>
    </domain>
</protein>
<keyword id="KW-0067">ATP-binding</keyword>
<keyword id="KW-0963">Cytoplasm</keyword>
<keyword id="KW-0479">Metal-binding</keyword>
<keyword id="KW-0501">Molybdenum cofactor biosynthesis</keyword>
<keyword id="KW-0511">Multifunctional enzyme</keyword>
<keyword id="KW-0547">Nucleotide-binding</keyword>
<keyword id="KW-0548">Nucleotidyltransferase</keyword>
<keyword id="KW-1185">Reference proteome</keyword>
<keyword id="KW-0808">Transferase</keyword>
<keyword id="KW-0819">tRNA processing</keyword>
<keyword id="KW-0862">Zinc</keyword>
<evidence type="ECO:0000250" key="1">
    <source>
        <dbReference type="UniProtKB" id="O95396"/>
    </source>
</evidence>
<evidence type="ECO:0000250" key="2">
    <source>
        <dbReference type="UniProtKB" id="Q9VLJ8"/>
    </source>
</evidence>
<evidence type="ECO:0000255" key="3">
    <source>
        <dbReference type="HAMAP-Rule" id="MF_03049"/>
    </source>
</evidence>
<dbReference type="EC" id="2.7.7.80" evidence="3"/>
<dbReference type="EC" id="2.8.1.11" evidence="3"/>
<dbReference type="EMBL" id="CH940649">
    <property type="protein sequence ID" value="EDW64589.1"/>
    <property type="molecule type" value="Genomic_DNA"/>
</dbReference>
<dbReference type="RefSeq" id="XP_002052434.1">
    <property type="nucleotide sequence ID" value="XM_002052398.4"/>
</dbReference>
<dbReference type="SMR" id="B4LRB9"/>
<dbReference type="FunCoup" id="B4LRB9">
    <property type="interactions" value="417"/>
</dbReference>
<dbReference type="STRING" id="7244.B4LRB9"/>
<dbReference type="EnsemblMetazoa" id="FBtr0237595">
    <property type="protein sequence ID" value="FBpp0236087"/>
    <property type="gene ID" value="FBgn0208789"/>
</dbReference>
<dbReference type="EnsemblMetazoa" id="XM_002052398.3">
    <property type="protein sequence ID" value="XP_002052434.1"/>
    <property type="gene ID" value="LOC6628147"/>
</dbReference>
<dbReference type="GeneID" id="6628147"/>
<dbReference type="KEGG" id="dvi:6628147"/>
<dbReference type="CTD" id="34187"/>
<dbReference type="eggNOG" id="KOG2017">
    <property type="taxonomic scope" value="Eukaryota"/>
</dbReference>
<dbReference type="HOGENOM" id="CLU_013325_1_0_1"/>
<dbReference type="InParanoid" id="B4LRB9"/>
<dbReference type="OMA" id="IPDVGMD"/>
<dbReference type="OrthoDB" id="10261062at2759"/>
<dbReference type="PhylomeDB" id="B4LRB9"/>
<dbReference type="UniPathway" id="UPA00344"/>
<dbReference type="UniPathway" id="UPA00988"/>
<dbReference type="Proteomes" id="UP000008792">
    <property type="component" value="Unassembled WGS sequence"/>
</dbReference>
<dbReference type="GO" id="GO:0005829">
    <property type="term" value="C:cytosol"/>
    <property type="evidence" value="ECO:0000250"/>
    <property type="project" value="UniProtKB"/>
</dbReference>
<dbReference type="GO" id="GO:0005524">
    <property type="term" value="F:ATP binding"/>
    <property type="evidence" value="ECO:0007669"/>
    <property type="project" value="UniProtKB-KW"/>
</dbReference>
<dbReference type="GO" id="GO:0046872">
    <property type="term" value="F:metal ion binding"/>
    <property type="evidence" value="ECO:0007669"/>
    <property type="project" value="UniProtKB-KW"/>
</dbReference>
<dbReference type="GO" id="GO:0061605">
    <property type="term" value="F:molybdopterin-synthase adenylyltransferase activity"/>
    <property type="evidence" value="ECO:0007669"/>
    <property type="project" value="UniProtKB-EC"/>
</dbReference>
<dbReference type="GO" id="GO:0061604">
    <property type="term" value="F:molybdopterin-synthase sulfurtransferase activity"/>
    <property type="evidence" value="ECO:0000250"/>
    <property type="project" value="UniProtKB"/>
</dbReference>
<dbReference type="GO" id="GO:0004792">
    <property type="term" value="F:thiosulfate-cyanide sulfurtransferase activity"/>
    <property type="evidence" value="ECO:0007669"/>
    <property type="project" value="TreeGrafter"/>
</dbReference>
<dbReference type="GO" id="GO:0042292">
    <property type="term" value="F:URM1 activating enzyme activity"/>
    <property type="evidence" value="ECO:0007669"/>
    <property type="project" value="TreeGrafter"/>
</dbReference>
<dbReference type="GO" id="GO:0006777">
    <property type="term" value="P:Mo-molybdopterin cofactor biosynthetic process"/>
    <property type="evidence" value="ECO:0000250"/>
    <property type="project" value="UniProtKB"/>
</dbReference>
<dbReference type="GO" id="GO:0032447">
    <property type="term" value="P:protein urmylation"/>
    <property type="evidence" value="ECO:0007669"/>
    <property type="project" value="EnsemblMetazoa"/>
</dbReference>
<dbReference type="GO" id="GO:0002143">
    <property type="term" value="P:tRNA wobble position uridine thiolation"/>
    <property type="evidence" value="ECO:0007669"/>
    <property type="project" value="InterPro"/>
</dbReference>
<dbReference type="CDD" id="cd01526">
    <property type="entry name" value="RHOD_ThiF"/>
    <property type="match status" value="1"/>
</dbReference>
<dbReference type="CDD" id="cd00757">
    <property type="entry name" value="ThiF_MoeB_HesA_family"/>
    <property type="match status" value="1"/>
</dbReference>
<dbReference type="FunFam" id="3.40.250.10:FF:000014">
    <property type="entry name" value="Adenylyltransferase and sulfurtransferase MOCS3"/>
    <property type="match status" value="1"/>
</dbReference>
<dbReference type="FunFam" id="3.40.50.720:FF:000206">
    <property type="entry name" value="Adenylyltransferase and sulfurtransferase MOCS3"/>
    <property type="match status" value="1"/>
</dbReference>
<dbReference type="Gene3D" id="3.40.50.720">
    <property type="entry name" value="NAD(P)-binding Rossmann-like Domain"/>
    <property type="match status" value="1"/>
</dbReference>
<dbReference type="Gene3D" id="3.40.250.10">
    <property type="entry name" value="Rhodanese-like domain"/>
    <property type="match status" value="1"/>
</dbReference>
<dbReference type="HAMAP" id="MF_03049">
    <property type="entry name" value="MOCS3_Uba4"/>
    <property type="match status" value="1"/>
</dbReference>
<dbReference type="InterPro" id="IPR028885">
    <property type="entry name" value="MOCS3/Uba4"/>
</dbReference>
<dbReference type="InterPro" id="IPR001763">
    <property type="entry name" value="Rhodanese-like_dom"/>
</dbReference>
<dbReference type="InterPro" id="IPR036873">
    <property type="entry name" value="Rhodanese-like_dom_sf"/>
</dbReference>
<dbReference type="InterPro" id="IPR045886">
    <property type="entry name" value="ThiF/MoeB/HesA"/>
</dbReference>
<dbReference type="InterPro" id="IPR000594">
    <property type="entry name" value="ThiF_NAD_FAD-bd"/>
</dbReference>
<dbReference type="InterPro" id="IPR035985">
    <property type="entry name" value="Ubiquitin-activating_enz"/>
</dbReference>
<dbReference type="NCBIfam" id="NF004281">
    <property type="entry name" value="PRK05690.1"/>
    <property type="match status" value="1"/>
</dbReference>
<dbReference type="PANTHER" id="PTHR10953:SF102">
    <property type="entry name" value="ADENYLYLTRANSFERASE AND SULFURTRANSFERASE MOCS3"/>
    <property type="match status" value="1"/>
</dbReference>
<dbReference type="PANTHER" id="PTHR10953">
    <property type="entry name" value="UBIQUITIN-ACTIVATING ENZYME E1"/>
    <property type="match status" value="1"/>
</dbReference>
<dbReference type="Pfam" id="PF00581">
    <property type="entry name" value="Rhodanese"/>
    <property type="match status" value="1"/>
</dbReference>
<dbReference type="Pfam" id="PF00899">
    <property type="entry name" value="ThiF"/>
    <property type="match status" value="1"/>
</dbReference>
<dbReference type="SMART" id="SM00450">
    <property type="entry name" value="RHOD"/>
    <property type="match status" value="1"/>
</dbReference>
<dbReference type="SUPFAM" id="SSF69572">
    <property type="entry name" value="Activating enzymes of the ubiquitin-like proteins"/>
    <property type="match status" value="1"/>
</dbReference>
<dbReference type="PROSITE" id="PS50206">
    <property type="entry name" value="RHODANESE_3"/>
    <property type="match status" value="1"/>
</dbReference>
<gene>
    <name evidence="2" type="primary">Uba4</name>
    <name type="ORF">GJ21670</name>
</gene>
<organism>
    <name type="scientific">Drosophila virilis</name>
    <name type="common">Fruit fly</name>
    <dbReference type="NCBI Taxonomy" id="7244"/>
    <lineage>
        <taxon>Eukaryota</taxon>
        <taxon>Metazoa</taxon>
        <taxon>Ecdysozoa</taxon>
        <taxon>Arthropoda</taxon>
        <taxon>Hexapoda</taxon>
        <taxon>Insecta</taxon>
        <taxon>Pterygota</taxon>
        <taxon>Neoptera</taxon>
        <taxon>Endopterygota</taxon>
        <taxon>Diptera</taxon>
        <taxon>Brachycera</taxon>
        <taxon>Muscomorpha</taxon>
        <taxon>Ephydroidea</taxon>
        <taxon>Drosophilidae</taxon>
        <taxon>Drosophila</taxon>
    </lineage>
</organism>
<proteinExistence type="inferred from homology"/>